<gene>
    <name type="primary">yosF</name>
    <name type="ordered locus">BSU20140</name>
</gene>
<protein>
    <recommendedName>
        <fullName>SPbeta prophage-derived uncharacterized protein YosF</fullName>
    </recommendedName>
</protein>
<reference key="1">
    <citation type="journal article" date="1997" name="Nature">
        <title>The complete genome sequence of the Gram-positive bacterium Bacillus subtilis.</title>
        <authorList>
            <person name="Kunst F."/>
            <person name="Ogasawara N."/>
            <person name="Moszer I."/>
            <person name="Albertini A.M."/>
            <person name="Alloni G."/>
            <person name="Azevedo V."/>
            <person name="Bertero M.G."/>
            <person name="Bessieres P."/>
            <person name="Bolotin A."/>
            <person name="Borchert S."/>
            <person name="Borriss R."/>
            <person name="Boursier L."/>
            <person name="Brans A."/>
            <person name="Braun M."/>
            <person name="Brignell S.C."/>
            <person name="Bron S."/>
            <person name="Brouillet S."/>
            <person name="Bruschi C.V."/>
            <person name="Caldwell B."/>
            <person name="Capuano V."/>
            <person name="Carter N.M."/>
            <person name="Choi S.-K."/>
            <person name="Codani J.-J."/>
            <person name="Connerton I.F."/>
            <person name="Cummings N.J."/>
            <person name="Daniel R.A."/>
            <person name="Denizot F."/>
            <person name="Devine K.M."/>
            <person name="Duesterhoeft A."/>
            <person name="Ehrlich S.D."/>
            <person name="Emmerson P.T."/>
            <person name="Entian K.-D."/>
            <person name="Errington J."/>
            <person name="Fabret C."/>
            <person name="Ferrari E."/>
            <person name="Foulger D."/>
            <person name="Fritz C."/>
            <person name="Fujita M."/>
            <person name="Fujita Y."/>
            <person name="Fuma S."/>
            <person name="Galizzi A."/>
            <person name="Galleron N."/>
            <person name="Ghim S.-Y."/>
            <person name="Glaser P."/>
            <person name="Goffeau A."/>
            <person name="Golightly E.J."/>
            <person name="Grandi G."/>
            <person name="Guiseppi G."/>
            <person name="Guy B.J."/>
            <person name="Haga K."/>
            <person name="Haiech J."/>
            <person name="Harwood C.R."/>
            <person name="Henaut A."/>
            <person name="Hilbert H."/>
            <person name="Holsappel S."/>
            <person name="Hosono S."/>
            <person name="Hullo M.-F."/>
            <person name="Itaya M."/>
            <person name="Jones L.-M."/>
            <person name="Joris B."/>
            <person name="Karamata D."/>
            <person name="Kasahara Y."/>
            <person name="Klaerr-Blanchard M."/>
            <person name="Klein C."/>
            <person name="Kobayashi Y."/>
            <person name="Koetter P."/>
            <person name="Koningstein G."/>
            <person name="Krogh S."/>
            <person name="Kumano M."/>
            <person name="Kurita K."/>
            <person name="Lapidus A."/>
            <person name="Lardinois S."/>
            <person name="Lauber J."/>
            <person name="Lazarevic V."/>
            <person name="Lee S.-M."/>
            <person name="Levine A."/>
            <person name="Liu H."/>
            <person name="Masuda S."/>
            <person name="Mauel C."/>
            <person name="Medigue C."/>
            <person name="Medina N."/>
            <person name="Mellado R.P."/>
            <person name="Mizuno M."/>
            <person name="Moestl D."/>
            <person name="Nakai S."/>
            <person name="Noback M."/>
            <person name="Noone D."/>
            <person name="O'Reilly M."/>
            <person name="Ogawa K."/>
            <person name="Ogiwara A."/>
            <person name="Oudega B."/>
            <person name="Park S.-H."/>
            <person name="Parro V."/>
            <person name="Pohl T.M."/>
            <person name="Portetelle D."/>
            <person name="Porwollik S."/>
            <person name="Prescott A.M."/>
            <person name="Presecan E."/>
            <person name="Pujic P."/>
            <person name="Purnelle B."/>
            <person name="Rapoport G."/>
            <person name="Rey M."/>
            <person name="Reynolds S."/>
            <person name="Rieger M."/>
            <person name="Rivolta C."/>
            <person name="Rocha E."/>
            <person name="Roche B."/>
            <person name="Rose M."/>
            <person name="Sadaie Y."/>
            <person name="Sato T."/>
            <person name="Scanlan E."/>
            <person name="Schleich S."/>
            <person name="Schroeter R."/>
            <person name="Scoffone F."/>
            <person name="Sekiguchi J."/>
            <person name="Sekowska A."/>
            <person name="Seror S.J."/>
            <person name="Serror P."/>
            <person name="Shin B.-S."/>
            <person name="Soldo B."/>
            <person name="Sorokin A."/>
            <person name="Tacconi E."/>
            <person name="Takagi T."/>
            <person name="Takahashi H."/>
            <person name="Takemaru K."/>
            <person name="Takeuchi M."/>
            <person name="Tamakoshi A."/>
            <person name="Tanaka T."/>
            <person name="Terpstra P."/>
            <person name="Tognoni A."/>
            <person name="Tosato V."/>
            <person name="Uchiyama S."/>
            <person name="Vandenbol M."/>
            <person name="Vannier F."/>
            <person name="Vassarotti A."/>
            <person name="Viari A."/>
            <person name="Wambutt R."/>
            <person name="Wedler E."/>
            <person name="Wedler H."/>
            <person name="Weitzenegger T."/>
            <person name="Winters P."/>
            <person name="Wipat A."/>
            <person name="Yamamoto H."/>
            <person name="Yamane K."/>
            <person name="Yasumoto K."/>
            <person name="Yata K."/>
            <person name="Yoshida K."/>
            <person name="Yoshikawa H.-F."/>
            <person name="Zumstein E."/>
            <person name="Yoshikawa H."/>
            <person name="Danchin A."/>
        </authorList>
    </citation>
    <scope>NUCLEOTIDE SEQUENCE [LARGE SCALE GENOMIC DNA]</scope>
    <source>
        <strain>168</strain>
    </source>
</reference>
<name>YOSF_BACSU</name>
<dbReference type="EMBL" id="AL009126">
    <property type="protein sequence ID" value="CAB13906.1"/>
    <property type="molecule type" value="Genomic_DNA"/>
</dbReference>
<dbReference type="RefSeq" id="NP_389896.1">
    <property type="nucleotide sequence ID" value="NC_000964.3"/>
</dbReference>
<dbReference type="RefSeq" id="WP_004399307.1">
    <property type="nucleotide sequence ID" value="NZ_OZ025638.1"/>
</dbReference>
<dbReference type="FunCoup" id="O31883">
    <property type="interactions" value="34"/>
</dbReference>
<dbReference type="STRING" id="224308.BSU20140"/>
<dbReference type="PaxDb" id="224308-BSU20140"/>
<dbReference type="EnsemblBacteria" id="CAB13906">
    <property type="protein sequence ID" value="CAB13906"/>
    <property type="gene ID" value="BSU_20140"/>
</dbReference>
<dbReference type="GeneID" id="939526"/>
<dbReference type="KEGG" id="bsu:BSU20140"/>
<dbReference type="PATRIC" id="fig|224308.179.peg.2204"/>
<dbReference type="InParanoid" id="O31883"/>
<dbReference type="OrthoDB" id="2911295at2"/>
<dbReference type="BioCyc" id="BSUB:BSU20140-MONOMER"/>
<dbReference type="Proteomes" id="UP000001570">
    <property type="component" value="Chromosome"/>
</dbReference>
<accession>O31883</accession>
<organism>
    <name type="scientific">Bacillus subtilis (strain 168)</name>
    <dbReference type="NCBI Taxonomy" id="224308"/>
    <lineage>
        <taxon>Bacteria</taxon>
        <taxon>Bacillati</taxon>
        <taxon>Bacillota</taxon>
        <taxon>Bacilli</taxon>
        <taxon>Bacillales</taxon>
        <taxon>Bacillaceae</taxon>
        <taxon>Bacillus</taxon>
    </lineage>
</organism>
<feature type="chain" id="PRO_0000369428" description="SPbeta prophage-derived uncharacterized protein YosF">
    <location>
        <begin position="1"/>
        <end position="41"/>
    </location>
</feature>
<proteinExistence type="predicted"/>
<sequence>MSDDNAAKIIFKKKSTGKIVGEMKATSLAADTILQNDNKSK</sequence>
<keyword id="KW-1185">Reference proteome</keyword>